<comment type="function">
    <text evidence="1">Specifically methylates guanosine-37 in various tRNAs.</text>
</comment>
<comment type="catalytic activity">
    <reaction evidence="1">
        <text>guanosine(37) in tRNA + S-adenosyl-L-methionine = N(1)-methylguanosine(37) in tRNA + S-adenosyl-L-homocysteine + H(+)</text>
        <dbReference type="Rhea" id="RHEA:36899"/>
        <dbReference type="Rhea" id="RHEA-COMP:10145"/>
        <dbReference type="Rhea" id="RHEA-COMP:10147"/>
        <dbReference type="ChEBI" id="CHEBI:15378"/>
        <dbReference type="ChEBI" id="CHEBI:57856"/>
        <dbReference type="ChEBI" id="CHEBI:59789"/>
        <dbReference type="ChEBI" id="CHEBI:73542"/>
        <dbReference type="ChEBI" id="CHEBI:74269"/>
        <dbReference type="EC" id="2.1.1.228"/>
    </reaction>
</comment>
<comment type="subunit">
    <text evidence="1">Homodimer.</text>
</comment>
<comment type="subcellular location">
    <subcellularLocation>
        <location evidence="1">Cytoplasm</location>
    </subcellularLocation>
</comment>
<comment type="similarity">
    <text evidence="1">Belongs to the RNA methyltransferase TrmD family.</text>
</comment>
<dbReference type="EC" id="2.1.1.228" evidence="1"/>
<dbReference type="EMBL" id="AE004969">
    <property type="protein sequence ID" value="AAW88928.1"/>
    <property type="molecule type" value="Genomic_DNA"/>
</dbReference>
<dbReference type="RefSeq" id="WP_003687474.1">
    <property type="nucleotide sequence ID" value="NC_002946.2"/>
</dbReference>
<dbReference type="RefSeq" id="YP_207340.1">
    <property type="nucleotide sequence ID" value="NC_002946.2"/>
</dbReference>
<dbReference type="SMR" id="Q5FA59"/>
<dbReference type="STRING" id="242231.NGO_0172"/>
<dbReference type="GeneID" id="66752434"/>
<dbReference type="KEGG" id="ngo:NGO_0172"/>
<dbReference type="PATRIC" id="fig|242231.10.peg.216"/>
<dbReference type="HOGENOM" id="CLU_047363_0_1_4"/>
<dbReference type="Proteomes" id="UP000000535">
    <property type="component" value="Chromosome"/>
</dbReference>
<dbReference type="GO" id="GO:0005829">
    <property type="term" value="C:cytosol"/>
    <property type="evidence" value="ECO:0007669"/>
    <property type="project" value="TreeGrafter"/>
</dbReference>
<dbReference type="GO" id="GO:0052906">
    <property type="term" value="F:tRNA (guanine(37)-N1)-methyltransferase activity"/>
    <property type="evidence" value="ECO:0007669"/>
    <property type="project" value="UniProtKB-UniRule"/>
</dbReference>
<dbReference type="GO" id="GO:0002939">
    <property type="term" value="P:tRNA N1-guanine methylation"/>
    <property type="evidence" value="ECO:0007669"/>
    <property type="project" value="TreeGrafter"/>
</dbReference>
<dbReference type="CDD" id="cd18080">
    <property type="entry name" value="TrmD-like"/>
    <property type="match status" value="1"/>
</dbReference>
<dbReference type="FunFam" id="1.10.1270.20:FF:000001">
    <property type="entry name" value="tRNA (guanine-N(1)-)-methyltransferase"/>
    <property type="match status" value="1"/>
</dbReference>
<dbReference type="FunFam" id="3.40.1280.10:FF:000001">
    <property type="entry name" value="tRNA (guanine-N(1)-)-methyltransferase"/>
    <property type="match status" value="1"/>
</dbReference>
<dbReference type="Gene3D" id="3.40.1280.10">
    <property type="match status" value="1"/>
</dbReference>
<dbReference type="Gene3D" id="1.10.1270.20">
    <property type="entry name" value="tRNA(m1g37)methyltransferase, domain 2"/>
    <property type="match status" value="1"/>
</dbReference>
<dbReference type="HAMAP" id="MF_00605">
    <property type="entry name" value="TrmD"/>
    <property type="match status" value="1"/>
</dbReference>
<dbReference type="InterPro" id="IPR029028">
    <property type="entry name" value="Alpha/beta_knot_MTases"/>
</dbReference>
<dbReference type="InterPro" id="IPR023148">
    <property type="entry name" value="tRNA_m1G_MeTrfase_C_sf"/>
</dbReference>
<dbReference type="InterPro" id="IPR002649">
    <property type="entry name" value="tRNA_m1G_MeTrfase_TrmD"/>
</dbReference>
<dbReference type="InterPro" id="IPR029026">
    <property type="entry name" value="tRNA_m1G_MTases_N"/>
</dbReference>
<dbReference type="InterPro" id="IPR016009">
    <property type="entry name" value="tRNA_MeTrfase_TRMD/TRM10"/>
</dbReference>
<dbReference type="NCBIfam" id="NF000648">
    <property type="entry name" value="PRK00026.1"/>
    <property type="match status" value="1"/>
</dbReference>
<dbReference type="NCBIfam" id="TIGR00088">
    <property type="entry name" value="trmD"/>
    <property type="match status" value="1"/>
</dbReference>
<dbReference type="PANTHER" id="PTHR46417">
    <property type="entry name" value="TRNA (GUANINE-N(1)-)-METHYLTRANSFERASE"/>
    <property type="match status" value="1"/>
</dbReference>
<dbReference type="PANTHER" id="PTHR46417:SF1">
    <property type="entry name" value="TRNA (GUANINE-N(1)-)-METHYLTRANSFERASE"/>
    <property type="match status" value="1"/>
</dbReference>
<dbReference type="Pfam" id="PF01746">
    <property type="entry name" value="tRNA_m1G_MT"/>
    <property type="match status" value="1"/>
</dbReference>
<dbReference type="PIRSF" id="PIRSF000386">
    <property type="entry name" value="tRNA_mtase"/>
    <property type="match status" value="1"/>
</dbReference>
<dbReference type="SUPFAM" id="SSF75217">
    <property type="entry name" value="alpha/beta knot"/>
    <property type="match status" value="1"/>
</dbReference>
<keyword id="KW-0963">Cytoplasm</keyword>
<keyword id="KW-0489">Methyltransferase</keyword>
<keyword id="KW-1185">Reference proteome</keyword>
<keyword id="KW-0949">S-adenosyl-L-methionine</keyword>
<keyword id="KW-0808">Transferase</keyword>
<keyword id="KW-0819">tRNA processing</keyword>
<gene>
    <name evidence="1" type="primary">trmD</name>
    <name type="ordered locus">NGO_0172</name>
</gene>
<proteinExistence type="inferred from homology"/>
<accession>Q5FA59</accession>
<sequence>MLIQAVTIFPEMFDSITRYGVTGRANRQGIWQFEAVNPRKFADNRLGYIDDRPFGGGPGMIMMAPPLHAAIEHAKAQSSQTAKVIYLSPQGKPLTHQKAAELAELTHLILLCGRYEGIDERLLQSSVDEEISIGDFVVSGGELPAMMLMDAVLRLVPGILGDIQSAEQDSFSSGILDCPHYTKPLEFQGMAVPEVLRSGNHGLIAEWRLEQSLRRTLERRPDLLEKRVLIPKESRLLNKILQEQREIQS</sequence>
<name>TRMD_NEIG1</name>
<organism>
    <name type="scientific">Neisseria gonorrhoeae (strain ATCC 700825 / FA 1090)</name>
    <dbReference type="NCBI Taxonomy" id="242231"/>
    <lineage>
        <taxon>Bacteria</taxon>
        <taxon>Pseudomonadati</taxon>
        <taxon>Pseudomonadota</taxon>
        <taxon>Betaproteobacteria</taxon>
        <taxon>Neisseriales</taxon>
        <taxon>Neisseriaceae</taxon>
        <taxon>Neisseria</taxon>
    </lineage>
</organism>
<feature type="chain" id="PRO_0000060419" description="tRNA (guanine-N(1)-)-methyltransferase">
    <location>
        <begin position="1"/>
        <end position="249"/>
    </location>
</feature>
<feature type="binding site" evidence="1">
    <location>
        <position position="113"/>
    </location>
    <ligand>
        <name>S-adenosyl-L-methionine</name>
        <dbReference type="ChEBI" id="CHEBI:59789"/>
    </ligand>
</feature>
<feature type="binding site" evidence="1">
    <location>
        <begin position="133"/>
        <end position="138"/>
    </location>
    <ligand>
        <name>S-adenosyl-L-methionine</name>
        <dbReference type="ChEBI" id="CHEBI:59789"/>
    </ligand>
</feature>
<protein>
    <recommendedName>
        <fullName evidence="1">tRNA (guanine-N(1)-)-methyltransferase</fullName>
        <ecNumber evidence="1">2.1.1.228</ecNumber>
    </recommendedName>
    <alternativeName>
        <fullName evidence="1">M1G-methyltransferase</fullName>
    </alternativeName>
    <alternativeName>
        <fullName evidence="1">tRNA [GM37] methyltransferase</fullName>
    </alternativeName>
</protein>
<evidence type="ECO:0000255" key="1">
    <source>
        <dbReference type="HAMAP-Rule" id="MF_00605"/>
    </source>
</evidence>
<reference key="1">
    <citation type="submission" date="2003-03" db="EMBL/GenBank/DDBJ databases">
        <title>The complete genome sequence of Neisseria gonorrhoeae.</title>
        <authorList>
            <person name="Lewis L.A."/>
            <person name="Gillaspy A.F."/>
            <person name="McLaughlin R.E."/>
            <person name="Gipson M."/>
            <person name="Ducey T.F."/>
            <person name="Ownbey T."/>
            <person name="Hartman K."/>
            <person name="Nydick C."/>
            <person name="Carson M.B."/>
            <person name="Vaughn J."/>
            <person name="Thomson C."/>
            <person name="Song L."/>
            <person name="Lin S."/>
            <person name="Yuan X."/>
            <person name="Najar F."/>
            <person name="Zhan M."/>
            <person name="Ren Q."/>
            <person name="Zhu H."/>
            <person name="Qi S."/>
            <person name="Kenton S.M."/>
            <person name="Lai H."/>
            <person name="White J.D."/>
            <person name="Clifton S."/>
            <person name="Roe B.A."/>
            <person name="Dyer D.W."/>
        </authorList>
    </citation>
    <scope>NUCLEOTIDE SEQUENCE [LARGE SCALE GENOMIC DNA]</scope>
    <source>
        <strain>ATCC 700825 / FA 1090</strain>
    </source>
</reference>